<protein>
    <recommendedName>
        <fullName evidence="1">Malate dehydrogenase</fullName>
        <ecNumber evidence="1">1.1.1.37</ecNumber>
    </recommendedName>
</protein>
<feature type="chain" id="PRO_0000241943" description="Malate dehydrogenase">
    <location>
        <begin position="1"/>
        <end position="320"/>
    </location>
</feature>
<feature type="active site" description="Proton acceptor" evidence="1">
    <location>
        <position position="176"/>
    </location>
</feature>
<feature type="binding site" evidence="1">
    <location>
        <begin position="10"/>
        <end position="15"/>
    </location>
    <ligand>
        <name>NAD(+)</name>
        <dbReference type="ChEBI" id="CHEBI:57540"/>
    </ligand>
</feature>
<feature type="binding site" evidence="1">
    <location>
        <position position="34"/>
    </location>
    <ligand>
        <name>NAD(+)</name>
        <dbReference type="ChEBI" id="CHEBI:57540"/>
    </ligand>
</feature>
<feature type="binding site" evidence="1">
    <location>
        <position position="83"/>
    </location>
    <ligand>
        <name>substrate</name>
    </ligand>
</feature>
<feature type="binding site" evidence="1">
    <location>
        <position position="89"/>
    </location>
    <ligand>
        <name>substrate</name>
    </ligand>
</feature>
<feature type="binding site" evidence="1">
    <location>
        <position position="96"/>
    </location>
    <ligand>
        <name>NAD(+)</name>
        <dbReference type="ChEBI" id="CHEBI:57540"/>
    </ligand>
</feature>
<feature type="binding site" evidence="1">
    <location>
        <begin position="119"/>
        <end position="121"/>
    </location>
    <ligand>
        <name>NAD(+)</name>
        <dbReference type="ChEBI" id="CHEBI:57540"/>
    </ligand>
</feature>
<feature type="binding site" evidence="1">
    <location>
        <position position="121"/>
    </location>
    <ligand>
        <name>substrate</name>
    </ligand>
</feature>
<feature type="binding site" evidence="1">
    <location>
        <position position="152"/>
    </location>
    <ligand>
        <name>substrate</name>
    </ligand>
</feature>
<feature type="strand" evidence="3">
    <location>
        <begin position="5"/>
        <end position="9"/>
    </location>
</feature>
<feature type="helix" evidence="3">
    <location>
        <begin position="13"/>
        <end position="24"/>
    </location>
</feature>
<feature type="strand" evidence="3">
    <location>
        <begin position="29"/>
        <end position="33"/>
    </location>
</feature>
<feature type="strand" evidence="3">
    <location>
        <begin position="35"/>
        <end position="38"/>
    </location>
</feature>
<feature type="helix" evidence="3">
    <location>
        <begin position="39"/>
        <end position="54"/>
    </location>
</feature>
<feature type="strand" evidence="3">
    <location>
        <begin position="60"/>
        <end position="65"/>
    </location>
</feature>
<feature type="helix" evidence="3">
    <location>
        <begin position="66"/>
        <end position="69"/>
    </location>
</feature>
<feature type="strand" evidence="3">
    <location>
        <begin position="73"/>
        <end position="77"/>
    </location>
</feature>
<feature type="helix" evidence="3">
    <location>
        <begin position="91"/>
        <end position="110"/>
    </location>
</feature>
<feature type="strand" evidence="3">
    <location>
        <begin position="115"/>
        <end position="118"/>
    </location>
</feature>
<feature type="helix" evidence="3">
    <location>
        <begin position="123"/>
        <end position="134"/>
    </location>
</feature>
<feature type="helix" evidence="3">
    <location>
        <begin position="138"/>
        <end position="140"/>
    </location>
</feature>
<feature type="strand" evidence="3">
    <location>
        <begin position="141"/>
        <end position="143"/>
    </location>
</feature>
<feature type="helix" evidence="3">
    <location>
        <begin position="146"/>
        <end position="161"/>
    </location>
</feature>
<feature type="helix" evidence="3">
    <location>
        <begin position="165"/>
        <end position="167"/>
    </location>
</feature>
<feature type="strand" evidence="3">
    <location>
        <begin position="172"/>
        <end position="174"/>
    </location>
</feature>
<feature type="helix" evidence="3">
    <location>
        <begin position="177"/>
        <end position="179"/>
    </location>
</feature>
<feature type="strand" evidence="3">
    <location>
        <begin position="180"/>
        <end position="182"/>
    </location>
</feature>
<feature type="helix" evidence="3">
    <location>
        <begin position="184"/>
        <end position="186"/>
    </location>
</feature>
<feature type="helix" evidence="3">
    <location>
        <begin position="194"/>
        <end position="199"/>
    </location>
</feature>
<feature type="helix" evidence="3">
    <location>
        <begin position="205"/>
        <end position="216"/>
    </location>
</feature>
<feature type="helix" evidence="3">
    <location>
        <begin position="218"/>
        <end position="226"/>
    </location>
</feature>
<feature type="strand" evidence="2">
    <location>
        <begin position="227"/>
        <end position="229"/>
    </location>
</feature>
<feature type="helix" evidence="3">
    <location>
        <begin position="233"/>
        <end position="247"/>
    </location>
</feature>
<feature type="strand" evidence="3">
    <location>
        <begin position="252"/>
        <end position="262"/>
    </location>
</feature>
<feature type="helix" evidence="3">
    <location>
        <begin position="263"/>
        <end position="265"/>
    </location>
</feature>
<feature type="strand" evidence="3">
    <location>
        <begin position="267"/>
        <end position="278"/>
    </location>
</feature>
<feature type="strand" evidence="3">
    <location>
        <begin position="281"/>
        <end position="285"/>
    </location>
</feature>
<feature type="helix" evidence="3">
    <location>
        <begin position="292"/>
        <end position="315"/>
    </location>
</feature>
<feature type="helix" evidence="3">
    <location>
        <begin position="317"/>
        <end position="319"/>
    </location>
</feature>
<sequence>MARNKIALIGSGMIGGTLAHLAGLKELGDVVLFDIAEGTPQGKGLDIAESSPVDGFDAKFTGANDYAAIEGADVVIVTAGVPRKPGMSRDDLLGINLKVMEQVGAGIKKYAPEAFVICITNPLDAMVWALQKFSGLPAHKVVGMAGVLDSARFRYFLSEEFNVSVEDVTVFVLGGHGDSMVPLARYSTVAGIPLPDLVKMGWTSQDKLDKIIQRTRDGGAEIVGLLKTGSAFYAPAASAIQMAESYLKDKKRVLPVAAQLSGQYGVKDMYVGVPTVIGANGVERIIEIDLDKDEKAQFDKSVASVAGLCEACIGIAPSLK</sequence>
<reference key="1">
    <citation type="journal article" date="2005" name="Infect. Immun.">
        <title>Whole-genome analyses of speciation events in pathogenic Brucellae.</title>
        <authorList>
            <person name="Chain P.S."/>
            <person name="Comerci D.J."/>
            <person name="Tolmasky M.E."/>
            <person name="Larimer F.W."/>
            <person name="Malfatti S.A."/>
            <person name="Vergez L.M."/>
            <person name="Aguero F."/>
            <person name="Land M.L."/>
            <person name="Ugalde R.A."/>
            <person name="Garcia E."/>
        </authorList>
    </citation>
    <scope>NUCLEOTIDE SEQUENCE [LARGE SCALE GENOMIC DNA]</scope>
    <source>
        <strain>2308</strain>
    </source>
</reference>
<comment type="function">
    <text evidence="1">Catalyzes the reversible oxidation of malate to oxaloacetate.</text>
</comment>
<comment type="catalytic activity">
    <reaction evidence="1">
        <text>(S)-malate + NAD(+) = oxaloacetate + NADH + H(+)</text>
        <dbReference type="Rhea" id="RHEA:21432"/>
        <dbReference type="ChEBI" id="CHEBI:15378"/>
        <dbReference type="ChEBI" id="CHEBI:15589"/>
        <dbReference type="ChEBI" id="CHEBI:16452"/>
        <dbReference type="ChEBI" id="CHEBI:57540"/>
        <dbReference type="ChEBI" id="CHEBI:57945"/>
        <dbReference type="EC" id="1.1.1.37"/>
    </reaction>
</comment>
<comment type="similarity">
    <text evidence="1">Belongs to the LDH/MDH superfamily. MDH type 3 family.</text>
</comment>
<accession>Q2YLR9</accession>
<evidence type="ECO:0000255" key="1">
    <source>
        <dbReference type="HAMAP-Rule" id="MF_00487"/>
    </source>
</evidence>
<evidence type="ECO:0007829" key="2">
    <source>
        <dbReference type="PDB" id="3GVH"/>
    </source>
</evidence>
<evidence type="ECO:0007829" key="3">
    <source>
        <dbReference type="PDB" id="3GVI"/>
    </source>
</evidence>
<organism>
    <name type="scientific">Brucella abortus (strain 2308)</name>
    <dbReference type="NCBI Taxonomy" id="359391"/>
    <lineage>
        <taxon>Bacteria</taxon>
        <taxon>Pseudomonadati</taxon>
        <taxon>Pseudomonadota</taxon>
        <taxon>Alphaproteobacteria</taxon>
        <taxon>Hyphomicrobiales</taxon>
        <taxon>Brucellaceae</taxon>
        <taxon>Brucella/Ochrobactrum group</taxon>
        <taxon>Brucella</taxon>
    </lineage>
</organism>
<name>MDH_BRUA2</name>
<gene>
    <name evidence="1" type="primary">mdh</name>
    <name type="ordered locus">BAB1_1927</name>
</gene>
<dbReference type="EC" id="1.1.1.37" evidence="1"/>
<dbReference type="EMBL" id="AM040264">
    <property type="protein sequence ID" value="CAJ11883.1"/>
    <property type="molecule type" value="Genomic_DNA"/>
</dbReference>
<dbReference type="RefSeq" id="WP_002964995.1">
    <property type="nucleotide sequence ID" value="NZ_KN046823.1"/>
</dbReference>
<dbReference type="PDB" id="3GVH">
    <property type="method" value="X-ray"/>
    <property type="resolution" value="2.30 A"/>
    <property type="chains" value="A/B/C/D=1-320"/>
</dbReference>
<dbReference type="PDB" id="3GVI">
    <property type="method" value="X-ray"/>
    <property type="resolution" value="2.25 A"/>
    <property type="chains" value="A/B/C/D/E/F=1-320"/>
</dbReference>
<dbReference type="PDBsum" id="3GVH"/>
<dbReference type="PDBsum" id="3GVI"/>
<dbReference type="SMR" id="Q2YLR9"/>
<dbReference type="STRING" id="359391.BAB1_1927"/>
<dbReference type="GeneID" id="93017742"/>
<dbReference type="KEGG" id="bmf:BAB1_1927"/>
<dbReference type="PATRIC" id="fig|359391.11.peg.1168"/>
<dbReference type="HOGENOM" id="CLU_045401_2_1_5"/>
<dbReference type="PhylomeDB" id="Q2YLR9"/>
<dbReference type="EvolutionaryTrace" id="Q2YLR9"/>
<dbReference type="Proteomes" id="UP000002719">
    <property type="component" value="Chromosome I"/>
</dbReference>
<dbReference type="GO" id="GO:0004459">
    <property type="term" value="F:L-lactate dehydrogenase activity"/>
    <property type="evidence" value="ECO:0007669"/>
    <property type="project" value="TreeGrafter"/>
</dbReference>
<dbReference type="GO" id="GO:0030060">
    <property type="term" value="F:L-malate dehydrogenase (NAD+) activity"/>
    <property type="evidence" value="ECO:0007669"/>
    <property type="project" value="UniProtKB-UniRule"/>
</dbReference>
<dbReference type="GO" id="GO:0006089">
    <property type="term" value="P:lactate metabolic process"/>
    <property type="evidence" value="ECO:0007669"/>
    <property type="project" value="TreeGrafter"/>
</dbReference>
<dbReference type="GO" id="GO:0006099">
    <property type="term" value="P:tricarboxylic acid cycle"/>
    <property type="evidence" value="ECO:0007669"/>
    <property type="project" value="UniProtKB-UniRule"/>
</dbReference>
<dbReference type="CDD" id="cd01339">
    <property type="entry name" value="LDH-like_MDH"/>
    <property type="match status" value="1"/>
</dbReference>
<dbReference type="FunFam" id="3.40.50.720:FF:000018">
    <property type="entry name" value="Malate dehydrogenase"/>
    <property type="match status" value="1"/>
</dbReference>
<dbReference type="FunFam" id="3.90.110.10:FF:000004">
    <property type="entry name" value="Malate dehydrogenase"/>
    <property type="match status" value="1"/>
</dbReference>
<dbReference type="Gene3D" id="3.90.110.10">
    <property type="entry name" value="Lactate dehydrogenase/glycoside hydrolase, family 4, C-terminal"/>
    <property type="match status" value="1"/>
</dbReference>
<dbReference type="Gene3D" id="3.40.50.720">
    <property type="entry name" value="NAD(P)-binding Rossmann-like Domain"/>
    <property type="match status" value="1"/>
</dbReference>
<dbReference type="HAMAP" id="MF_00487">
    <property type="entry name" value="Malate_dehydrog_3"/>
    <property type="match status" value="1"/>
</dbReference>
<dbReference type="InterPro" id="IPR001557">
    <property type="entry name" value="L-lactate/malate_DH"/>
</dbReference>
<dbReference type="InterPro" id="IPR022383">
    <property type="entry name" value="Lactate/malate_DH_C"/>
</dbReference>
<dbReference type="InterPro" id="IPR001236">
    <property type="entry name" value="Lactate/malate_DH_N"/>
</dbReference>
<dbReference type="InterPro" id="IPR015955">
    <property type="entry name" value="Lactate_DH/Glyco_Ohase_4_C"/>
</dbReference>
<dbReference type="InterPro" id="IPR011275">
    <property type="entry name" value="Malate_DH_type3"/>
</dbReference>
<dbReference type="InterPro" id="IPR036291">
    <property type="entry name" value="NAD(P)-bd_dom_sf"/>
</dbReference>
<dbReference type="NCBIfam" id="TIGR01763">
    <property type="entry name" value="MalateDH_bact"/>
    <property type="match status" value="1"/>
</dbReference>
<dbReference type="NCBIfam" id="NF004863">
    <property type="entry name" value="PRK06223.1"/>
    <property type="match status" value="1"/>
</dbReference>
<dbReference type="PANTHER" id="PTHR43128">
    <property type="entry name" value="L-2-HYDROXYCARBOXYLATE DEHYDROGENASE (NAD(P)(+))"/>
    <property type="match status" value="1"/>
</dbReference>
<dbReference type="PANTHER" id="PTHR43128:SF16">
    <property type="entry name" value="L-LACTATE DEHYDROGENASE"/>
    <property type="match status" value="1"/>
</dbReference>
<dbReference type="Pfam" id="PF02866">
    <property type="entry name" value="Ldh_1_C"/>
    <property type="match status" value="1"/>
</dbReference>
<dbReference type="Pfam" id="PF00056">
    <property type="entry name" value="Ldh_1_N"/>
    <property type="match status" value="1"/>
</dbReference>
<dbReference type="PIRSF" id="PIRSF000102">
    <property type="entry name" value="Lac_mal_DH"/>
    <property type="match status" value="1"/>
</dbReference>
<dbReference type="PRINTS" id="PR00086">
    <property type="entry name" value="LLDHDRGNASE"/>
</dbReference>
<dbReference type="SUPFAM" id="SSF56327">
    <property type="entry name" value="LDH C-terminal domain-like"/>
    <property type="match status" value="1"/>
</dbReference>
<dbReference type="SUPFAM" id="SSF51735">
    <property type="entry name" value="NAD(P)-binding Rossmann-fold domains"/>
    <property type="match status" value="1"/>
</dbReference>
<proteinExistence type="evidence at protein level"/>
<keyword id="KW-0002">3D-structure</keyword>
<keyword id="KW-0520">NAD</keyword>
<keyword id="KW-0560">Oxidoreductase</keyword>
<keyword id="KW-1185">Reference proteome</keyword>
<keyword id="KW-0816">Tricarboxylic acid cycle</keyword>